<dbReference type="EMBL" id="CP000038">
    <property type="protein sequence ID" value="AAZ87640.1"/>
    <property type="molecule type" value="Genomic_DNA"/>
</dbReference>
<dbReference type="RefSeq" id="WP_000109289.1">
    <property type="nucleotide sequence ID" value="NC_007384.1"/>
</dbReference>
<dbReference type="SMR" id="Q3Z3M2"/>
<dbReference type="KEGG" id="ssn:SSON_0899"/>
<dbReference type="HOGENOM" id="CLU_035018_1_2_6"/>
<dbReference type="Proteomes" id="UP000002529">
    <property type="component" value="Chromosome"/>
</dbReference>
<dbReference type="GO" id="GO:0005886">
    <property type="term" value="C:plasma membrane"/>
    <property type="evidence" value="ECO:0007669"/>
    <property type="project" value="UniProtKB-SubCell"/>
</dbReference>
<dbReference type="GO" id="GO:0022857">
    <property type="term" value="F:transmembrane transporter activity"/>
    <property type="evidence" value="ECO:0007669"/>
    <property type="project" value="UniProtKB-UniRule"/>
</dbReference>
<dbReference type="CDD" id="cd17477">
    <property type="entry name" value="MFS_YcaD_like"/>
    <property type="match status" value="1"/>
</dbReference>
<dbReference type="FunFam" id="1.20.1250.20:FF:000041">
    <property type="entry name" value="Uncharacterized MFS-type transporter YcaD"/>
    <property type="match status" value="1"/>
</dbReference>
<dbReference type="FunFam" id="1.20.1250.20:FF:000066">
    <property type="entry name" value="Uncharacterized MFS-type transporter YcaD"/>
    <property type="match status" value="1"/>
</dbReference>
<dbReference type="Gene3D" id="1.20.1250.20">
    <property type="entry name" value="MFS general substrate transporter like domains"/>
    <property type="match status" value="2"/>
</dbReference>
<dbReference type="HAMAP" id="MF_01149">
    <property type="entry name" value="MFS_YcaD"/>
    <property type="match status" value="1"/>
</dbReference>
<dbReference type="InterPro" id="IPR011701">
    <property type="entry name" value="MFS"/>
</dbReference>
<dbReference type="InterPro" id="IPR020846">
    <property type="entry name" value="MFS_dom"/>
</dbReference>
<dbReference type="InterPro" id="IPR036259">
    <property type="entry name" value="MFS_trans_sf"/>
</dbReference>
<dbReference type="InterPro" id="IPR023745">
    <property type="entry name" value="MFS_YcaD"/>
</dbReference>
<dbReference type="InterPro" id="IPR047200">
    <property type="entry name" value="MFS_YcaD-like"/>
</dbReference>
<dbReference type="NCBIfam" id="NF002962">
    <property type="entry name" value="PRK03633.1"/>
    <property type="match status" value="1"/>
</dbReference>
<dbReference type="PANTHER" id="PTHR23521">
    <property type="entry name" value="TRANSPORTER MFS SUPERFAMILY"/>
    <property type="match status" value="1"/>
</dbReference>
<dbReference type="PANTHER" id="PTHR23521:SF2">
    <property type="entry name" value="TRANSPORTER MFS SUPERFAMILY"/>
    <property type="match status" value="1"/>
</dbReference>
<dbReference type="Pfam" id="PF07690">
    <property type="entry name" value="MFS_1"/>
    <property type="match status" value="1"/>
</dbReference>
<dbReference type="SUPFAM" id="SSF103473">
    <property type="entry name" value="MFS general substrate transporter"/>
    <property type="match status" value="1"/>
</dbReference>
<dbReference type="PROSITE" id="PS50850">
    <property type="entry name" value="MFS"/>
    <property type="match status" value="1"/>
</dbReference>
<organism>
    <name type="scientific">Shigella sonnei (strain Ss046)</name>
    <dbReference type="NCBI Taxonomy" id="300269"/>
    <lineage>
        <taxon>Bacteria</taxon>
        <taxon>Pseudomonadati</taxon>
        <taxon>Pseudomonadota</taxon>
        <taxon>Gammaproteobacteria</taxon>
        <taxon>Enterobacterales</taxon>
        <taxon>Enterobacteriaceae</taxon>
        <taxon>Shigella</taxon>
    </lineage>
</organism>
<feature type="chain" id="PRO_1000065498" description="Uncharacterized MFS-type transporter YcaD">
    <location>
        <begin position="1"/>
        <end position="382"/>
    </location>
</feature>
<feature type="transmembrane region" description="Helical" evidence="1">
    <location>
        <begin position="14"/>
        <end position="34"/>
    </location>
</feature>
<feature type="transmembrane region" description="Helical" evidence="1">
    <location>
        <begin position="45"/>
        <end position="65"/>
    </location>
</feature>
<feature type="transmembrane region" description="Helical" evidence="1">
    <location>
        <begin position="79"/>
        <end position="99"/>
    </location>
</feature>
<feature type="transmembrane region" description="Helical" evidence="1">
    <location>
        <begin position="102"/>
        <end position="122"/>
    </location>
</feature>
<feature type="transmembrane region" description="Helical" evidence="1">
    <location>
        <begin position="131"/>
        <end position="151"/>
    </location>
</feature>
<feature type="transmembrane region" description="Helical" evidence="1">
    <location>
        <begin position="157"/>
        <end position="177"/>
    </location>
</feature>
<feature type="transmembrane region" description="Helical" evidence="1">
    <location>
        <begin position="204"/>
        <end position="224"/>
    </location>
</feature>
<feature type="transmembrane region" description="Helical" evidence="1">
    <location>
        <begin position="235"/>
        <end position="255"/>
    </location>
</feature>
<feature type="transmembrane region" description="Helical" evidence="1">
    <location>
        <begin position="270"/>
        <end position="290"/>
    </location>
</feature>
<feature type="transmembrane region" description="Helical" evidence="1">
    <location>
        <begin position="291"/>
        <end position="311"/>
    </location>
</feature>
<feature type="transmembrane region" description="Helical" evidence="1">
    <location>
        <begin position="325"/>
        <end position="345"/>
    </location>
</feature>
<feature type="transmembrane region" description="Helical" evidence="1">
    <location>
        <begin position="348"/>
        <end position="368"/>
    </location>
</feature>
<sequence>MSTYTRPVMLLLSGLLLLTLAIAVLNTLVPLWLAQEHMSTWQVGVVSSSYFTGNLVGTLLTGYVIKRIGFNRSYYLASFIFAAGCAGLGLMIGFWSWLAWRFVAGVGCAMIWVVVESALMCSGTSRNRGRLLAAYMMVYYVGTFLGQLLVSKVSTELMSVLPWVTGLTLAGILPLLFTRVLNQQAENHDSTSITAMLKLRQARLGVNGCIISGIVLGSLYGLMPLYLNHKGVSNASIGFWMAVLVSAGILGQWPIGRLADKFGRLLVLRVQVFVVILGSIAMLSQAAMAPALFILGAAGFTLYPVAMAWACEKVEHHQLVAMNQALLLSYTVGSLLGPSFTAMLMQNFSDNLLFIMIASVSFIYLLMLLRNAGHTPKPVAHV</sequence>
<comment type="subcellular location">
    <subcellularLocation>
        <location evidence="1">Cell inner membrane</location>
        <topology evidence="1">Multi-pass membrane protein</topology>
    </subcellularLocation>
</comment>
<comment type="similarity">
    <text evidence="1">Belongs to the major facilitator superfamily. YcaD (TC 2.A.1.26) family.</text>
</comment>
<evidence type="ECO:0000255" key="1">
    <source>
        <dbReference type="HAMAP-Rule" id="MF_01149"/>
    </source>
</evidence>
<accession>Q3Z3M2</accession>
<name>YCAD_SHISS</name>
<gene>
    <name evidence="1" type="primary">ycaD</name>
    <name type="ordered locus">SSON_0899</name>
</gene>
<proteinExistence type="inferred from homology"/>
<reference key="1">
    <citation type="journal article" date="2005" name="Nucleic Acids Res.">
        <title>Genome dynamics and diversity of Shigella species, the etiologic agents of bacillary dysentery.</title>
        <authorList>
            <person name="Yang F."/>
            <person name="Yang J."/>
            <person name="Zhang X."/>
            <person name="Chen L."/>
            <person name="Jiang Y."/>
            <person name="Yan Y."/>
            <person name="Tang X."/>
            <person name="Wang J."/>
            <person name="Xiong Z."/>
            <person name="Dong J."/>
            <person name="Xue Y."/>
            <person name="Zhu Y."/>
            <person name="Xu X."/>
            <person name="Sun L."/>
            <person name="Chen S."/>
            <person name="Nie H."/>
            <person name="Peng J."/>
            <person name="Xu J."/>
            <person name="Wang Y."/>
            <person name="Yuan Z."/>
            <person name="Wen Y."/>
            <person name="Yao Z."/>
            <person name="Shen Y."/>
            <person name="Qiang B."/>
            <person name="Hou Y."/>
            <person name="Yu J."/>
            <person name="Jin Q."/>
        </authorList>
    </citation>
    <scope>NUCLEOTIDE SEQUENCE [LARGE SCALE GENOMIC DNA]</scope>
    <source>
        <strain>Ss046</strain>
    </source>
</reference>
<protein>
    <recommendedName>
        <fullName evidence="1">Uncharacterized MFS-type transporter YcaD</fullName>
    </recommendedName>
</protein>
<keyword id="KW-0997">Cell inner membrane</keyword>
<keyword id="KW-1003">Cell membrane</keyword>
<keyword id="KW-0472">Membrane</keyword>
<keyword id="KW-1185">Reference proteome</keyword>
<keyword id="KW-0812">Transmembrane</keyword>
<keyword id="KW-1133">Transmembrane helix</keyword>
<keyword id="KW-0813">Transport</keyword>